<keyword id="KW-0648">Protein biosynthesis</keyword>
<keyword id="KW-0808">Transferase</keyword>
<reference key="1">
    <citation type="journal article" date="2009" name="Nat. Genet.">
        <title>Comparative genomic and phylogeographic analysis of Mycobacterium leprae.</title>
        <authorList>
            <person name="Monot M."/>
            <person name="Honore N."/>
            <person name="Garnier T."/>
            <person name="Zidane N."/>
            <person name="Sherafi D."/>
            <person name="Paniz-Mondolfi A."/>
            <person name="Matsuoka M."/>
            <person name="Taylor G.M."/>
            <person name="Donoghue H.D."/>
            <person name="Bouwman A."/>
            <person name="Mays S."/>
            <person name="Watson C."/>
            <person name="Lockwood D."/>
            <person name="Khamispour A."/>
            <person name="Dowlati Y."/>
            <person name="Jianping S."/>
            <person name="Rea T.H."/>
            <person name="Vera-Cabrera L."/>
            <person name="Stefani M.M."/>
            <person name="Banu S."/>
            <person name="Macdonald M."/>
            <person name="Sapkota B.R."/>
            <person name="Spencer J.S."/>
            <person name="Thomas J."/>
            <person name="Harshman K."/>
            <person name="Singh P."/>
            <person name="Busso P."/>
            <person name="Gattiker A."/>
            <person name="Rougemont J."/>
            <person name="Brennan P.J."/>
            <person name="Cole S.T."/>
        </authorList>
    </citation>
    <scope>NUCLEOTIDE SEQUENCE [LARGE SCALE GENOMIC DNA]</scope>
    <source>
        <strain>Br4923</strain>
    </source>
</reference>
<protein>
    <recommendedName>
        <fullName evidence="1">Methionyl-tRNA formyltransferase</fullName>
        <ecNumber evidence="1">2.1.2.9</ecNumber>
    </recommendedName>
</protein>
<name>FMT_MYCLB</name>
<evidence type="ECO:0000255" key="1">
    <source>
        <dbReference type="HAMAP-Rule" id="MF_00182"/>
    </source>
</evidence>
<proteinExistence type="inferred from homology"/>
<accession>B8ZUM6</accession>
<sequence>MLVRLVFAGTPESALPALCRLIDSPRHDVIAVLTRPDAASGRRGKPEPSPVAREALDRGIPLLRPARPNSPVFVSELSEWAPECCVVVAYGALLGSPLLAVPPRGWVNLHFSLLPAWRGAAPVQAAIAAGDTITGATTFQIEPSLDSGPVYGVVTETIQPTDTAGDLLERLAVSGATLLSSTLDGIADAILTPRQQPVDGVSFAPKITVEQARVCWDLPAPVVERRIRAVTPNPGAWTLVGKLRVKLGPVRFDSGAVEVPRLLKPLLPGGIHVDHKSVWIGTGSDPVRLSKVQPQGKKFMNAVDWAHGARLDPAARAS</sequence>
<feature type="chain" id="PRO_1000190033" description="Methionyl-tRNA formyltransferase">
    <location>
        <begin position="1"/>
        <end position="318"/>
    </location>
</feature>
<feature type="binding site" evidence="1">
    <location>
        <begin position="112"/>
        <end position="115"/>
    </location>
    <ligand>
        <name>(6S)-5,6,7,8-tetrahydrofolate</name>
        <dbReference type="ChEBI" id="CHEBI:57453"/>
    </ligand>
</feature>
<gene>
    <name evidence="1" type="primary">fmt</name>
    <name type="ordered locus">MLBr00552</name>
</gene>
<organism>
    <name type="scientific">Mycobacterium leprae (strain Br4923)</name>
    <dbReference type="NCBI Taxonomy" id="561304"/>
    <lineage>
        <taxon>Bacteria</taxon>
        <taxon>Bacillati</taxon>
        <taxon>Actinomycetota</taxon>
        <taxon>Actinomycetes</taxon>
        <taxon>Mycobacteriales</taxon>
        <taxon>Mycobacteriaceae</taxon>
        <taxon>Mycobacterium</taxon>
    </lineage>
</organism>
<comment type="function">
    <text evidence="1">Attaches a formyl group to the free amino group of methionyl-tRNA(fMet). The formyl group appears to play a dual role in the initiator identity of N-formylmethionyl-tRNA by promoting its recognition by IF2 and preventing the misappropriation of this tRNA by the elongation apparatus.</text>
</comment>
<comment type="catalytic activity">
    <reaction evidence="1">
        <text>L-methionyl-tRNA(fMet) + (6R)-10-formyltetrahydrofolate = N-formyl-L-methionyl-tRNA(fMet) + (6S)-5,6,7,8-tetrahydrofolate + H(+)</text>
        <dbReference type="Rhea" id="RHEA:24380"/>
        <dbReference type="Rhea" id="RHEA-COMP:9952"/>
        <dbReference type="Rhea" id="RHEA-COMP:9953"/>
        <dbReference type="ChEBI" id="CHEBI:15378"/>
        <dbReference type="ChEBI" id="CHEBI:57453"/>
        <dbReference type="ChEBI" id="CHEBI:78530"/>
        <dbReference type="ChEBI" id="CHEBI:78844"/>
        <dbReference type="ChEBI" id="CHEBI:195366"/>
        <dbReference type="EC" id="2.1.2.9"/>
    </reaction>
</comment>
<comment type="similarity">
    <text evidence="1">Belongs to the Fmt family.</text>
</comment>
<dbReference type="EC" id="2.1.2.9" evidence="1"/>
<dbReference type="EMBL" id="FM211192">
    <property type="protein sequence ID" value="CAR70645.1"/>
    <property type="molecule type" value="Genomic_DNA"/>
</dbReference>
<dbReference type="SMR" id="B8ZUM6"/>
<dbReference type="KEGG" id="mlb:MLBr00552"/>
<dbReference type="HOGENOM" id="CLU_033347_2_0_11"/>
<dbReference type="Proteomes" id="UP000006900">
    <property type="component" value="Chromosome"/>
</dbReference>
<dbReference type="GO" id="GO:0005829">
    <property type="term" value="C:cytosol"/>
    <property type="evidence" value="ECO:0007669"/>
    <property type="project" value="TreeGrafter"/>
</dbReference>
<dbReference type="GO" id="GO:0004479">
    <property type="term" value="F:methionyl-tRNA formyltransferase activity"/>
    <property type="evidence" value="ECO:0007669"/>
    <property type="project" value="UniProtKB-UniRule"/>
</dbReference>
<dbReference type="CDD" id="cd08646">
    <property type="entry name" value="FMT_core_Met-tRNA-FMT_N"/>
    <property type="match status" value="1"/>
</dbReference>
<dbReference type="CDD" id="cd08704">
    <property type="entry name" value="Met_tRNA_FMT_C"/>
    <property type="match status" value="1"/>
</dbReference>
<dbReference type="FunFam" id="3.40.50.12230:FF:000001">
    <property type="entry name" value="Methionyl-tRNA formyltransferase"/>
    <property type="match status" value="1"/>
</dbReference>
<dbReference type="Gene3D" id="3.40.50.12230">
    <property type="match status" value="1"/>
</dbReference>
<dbReference type="HAMAP" id="MF_00182">
    <property type="entry name" value="Formyl_trans"/>
    <property type="match status" value="1"/>
</dbReference>
<dbReference type="InterPro" id="IPR005794">
    <property type="entry name" value="Fmt"/>
</dbReference>
<dbReference type="InterPro" id="IPR005793">
    <property type="entry name" value="Formyl_trans_C"/>
</dbReference>
<dbReference type="InterPro" id="IPR002376">
    <property type="entry name" value="Formyl_transf_N"/>
</dbReference>
<dbReference type="InterPro" id="IPR036477">
    <property type="entry name" value="Formyl_transf_N_sf"/>
</dbReference>
<dbReference type="InterPro" id="IPR011034">
    <property type="entry name" value="Formyl_transferase-like_C_sf"/>
</dbReference>
<dbReference type="InterPro" id="IPR044135">
    <property type="entry name" value="Met-tRNA-FMT_C"/>
</dbReference>
<dbReference type="InterPro" id="IPR041711">
    <property type="entry name" value="Met-tRNA-FMT_N"/>
</dbReference>
<dbReference type="NCBIfam" id="TIGR00460">
    <property type="entry name" value="fmt"/>
    <property type="match status" value="1"/>
</dbReference>
<dbReference type="PANTHER" id="PTHR11138">
    <property type="entry name" value="METHIONYL-TRNA FORMYLTRANSFERASE"/>
    <property type="match status" value="1"/>
</dbReference>
<dbReference type="PANTHER" id="PTHR11138:SF5">
    <property type="entry name" value="METHIONYL-TRNA FORMYLTRANSFERASE, MITOCHONDRIAL"/>
    <property type="match status" value="1"/>
</dbReference>
<dbReference type="Pfam" id="PF02911">
    <property type="entry name" value="Formyl_trans_C"/>
    <property type="match status" value="1"/>
</dbReference>
<dbReference type="Pfam" id="PF00551">
    <property type="entry name" value="Formyl_trans_N"/>
    <property type="match status" value="1"/>
</dbReference>
<dbReference type="SUPFAM" id="SSF50486">
    <property type="entry name" value="FMT C-terminal domain-like"/>
    <property type="match status" value="1"/>
</dbReference>
<dbReference type="SUPFAM" id="SSF53328">
    <property type="entry name" value="Formyltransferase"/>
    <property type="match status" value="1"/>
</dbReference>